<geneLocation type="chloroplast"/>
<sequence>MGQKINPLGFRLGTTQGHHSLWFSQPKNYSEGLQEDQKIRDCIKNYVQKNMRTSSGVEGIARIEIKKRIDLIQVIIFMGFPKLLIESRPRGIEELQTTLQKEFNCVNRKLNIAVTRIAKPYGNPNILAEFIAGQLKNRVSFRKAMKKAIELTEQADTKGIQIQIAGRIDGKEIARVEWIREGRVPLQTIRAKIDYCSYTVRTIYGVLGIKIWIFLDQE</sequence>
<gene>
    <name type="primary">rps3</name>
</gene>
<evidence type="ECO:0000250" key="1"/>
<evidence type="ECO:0000305" key="2"/>
<feature type="chain" id="PRO_0000230755" description="Small ribosomal subunit protein uS3c">
    <location>
        <begin position="1"/>
        <end position="218"/>
    </location>
</feature>
<feature type="domain" description="KH type-2">
    <location>
        <begin position="47"/>
        <end position="118"/>
    </location>
</feature>
<reference key="1">
    <citation type="journal article" date="2006" name="Mol. Genet. Genomics">
        <title>The chloroplast genome of Nicotiana sylvestris and Nicotiana tomentosiformis: complete sequencing confirms that the Nicotiana sylvestris progenitor is the maternal genome donor of Nicotiana tabacum.</title>
        <authorList>
            <person name="Yukawa M."/>
            <person name="Tsudzuki T."/>
            <person name="Sugiura M."/>
        </authorList>
    </citation>
    <scope>NUCLEOTIDE SEQUENCE [LARGE SCALE GENOMIC DNA]</scope>
</reference>
<keyword id="KW-0150">Chloroplast</keyword>
<keyword id="KW-0934">Plastid</keyword>
<keyword id="KW-0687">Ribonucleoprotein</keyword>
<keyword id="KW-0689">Ribosomal protein</keyword>
<keyword id="KW-0694">RNA-binding</keyword>
<keyword id="KW-0699">rRNA-binding</keyword>
<comment type="subunit">
    <text evidence="1">Part of the 30S ribosomal subunit.</text>
</comment>
<comment type="subcellular location">
    <subcellularLocation>
        <location>Plastid</location>
        <location>Chloroplast</location>
    </subcellularLocation>
</comment>
<comment type="similarity">
    <text evidence="2">Belongs to the universal ribosomal protein uS3 family.</text>
</comment>
<dbReference type="EMBL" id="AB240139">
    <property type="protein sequence ID" value="BAE48042.1"/>
    <property type="molecule type" value="Genomic_DNA"/>
</dbReference>
<dbReference type="RefSeq" id="YP_398903.1">
    <property type="nucleotide sequence ID" value="NC_007602.1"/>
</dbReference>
<dbReference type="SMR" id="Q33BZ3"/>
<dbReference type="GeneID" id="3776389"/>
<dbReference type="KEGG" id="nto:3776389"/>
<dbReference type="OrthoDB" id="1842609at2759"/>
<dbReference type="GO" id="GO:0009507">
    <property type="term" value="C:chloroplast"/>
    <property type="evidence" value="ECO:0007669"/>
    <property type="project" value="UniProtKB-SubCell"/>
</dbReference>
<dbReference type="GO" id="GO:0022627">
    <property type="term" value="C:cytosolic small ribosomal subunit"/>
    <property type="evidence" value="ECO:0007669"/>
    <property type="project" value="TreeGrafter"/>
</dbReference>
<dbReference type="GO" id="GO:0019843">
    <property type="term" value="F:rRNA binding"/>
    <property type="evidence" value="ECO:0007669"/>
    <property type="project" value="UniProtKB-UniRule"/>
</dbReference>
<dbReference type="GO" id="GO:0003735">
    <property type="term" value="F:structural constituent of ribosome"/>
    <property type="evidence" value="ECO:0007669"/>
    <property type="project" value="InterPro"/>
</dbReference>
<dbReference type="GO" id="GO:0006412">
    <property type="term" value="P:translation"/>
    <property type="evidence" value="ECO:0007669"/>
    <property type="project" value="UniProtKB-UniRule"/>
</dbReference>
<dbReference type="CDD" id="cd02412">
    <property type="entry name" value="KH-II_30S_S3"/>
    <property type="match status" value="1"/>
</dbReference>
<dbReference type="FunFam" id="3.30.1140.32:FF:000003">
    <property type="entry name" value="30S ribosomal protein S3, chloroplastic"/>
    <property type="match status" value="1"/>
</dbReference>
<dbReference type="FunFam" id="3.30.300.20:FF:000008">
    <property type="entry name" value="30S ribosomal protein S3, chloroplastic"/>
    <property type="match status" value="1"/>
</dbReference>
<dbReference type="Gene3D" id="3.30.300.20">
    <property type="match status" value="1"/>
</dbReference>
<dbReference type="Gene3D" id="3.30.1140.32">
    <property type="entry name" value="Ribosomal protein S3, C-terminal domain"/>
    <property type="match status" value="1"/>
</dbReference>
<dbReference type="HAMAP" id="MF_01309_B">
    <property type="entry name" value="Ribosomal_uS3_B"/>
    <property type="match status" value="1"/>
</dbReference>
<dbReference type="InterPro" id="IPR015946">
    <property type="entry name" value="KH_dom-like_a/b"/>
</dbReference>
<dbReference type="InterPro" id="IPR004044">
    <property type="entry name" value="KH_dom_type_2"/>
</dbReference>
<dbReference type="InterPro" id="IPR009019">
    <property type="entry name" value="KH_sf_prok-type"/>
</dbReference>
<dbReference type="InterPro" id="IPR036419">
    <property type="entry name" value="Ribosomal_S3_C_sf"/>
</dbReference>
<dbReference type="InterPro" id="IPR005704">
    <property type="entry name" value="Ribosomal_uS3_bac-typ"/>
</dbReference>
<dbReference type="InterPro" id="IPR001351">
    <property type="entry name" value="Ribosomal_uS3_C"/>
</dbReference>
<dbReference type="InterPro" id="IPR018280">
    <property type="entry name" value="Ribosomal_uS3_CS"/>
</dbReference>
<dbReference type="NCBIfam" id="TIGR01009">
    <property type="entry name" value="rpsC_bact"/>
    <property type="match status" value="1"/>
</dbReference>
<dbReference type="PANTHER" id="PTHR11760">
    <property type="entry name" value="30S/40S RIBOSOMAL PROTEIN S3"/>
    <property type="match status" value="1"/>
</dbReference>
<dbReference type="PANTHER" id="PTHR11760:SF19">
    <property type="entry name" value="SMALL RIBOSOMAL SUBUNIT PROTEIN US3C"/>
    <property type="match status" value="1"/>
</dbReference>
<dbReference type="Pfam" id="PF00189">
    <property type="entry name" value="Ribosomal_S3_C"/>
    <property type="match status" value="1"/>
</dbReference>
<dbReference type="SUPFAM" id="SSF54814">
    <property type="entry name" value="Prokaryotic type KH domain (KH-domain type II)"/>
    <property type="match status" value="1"/>
</dbReference>
<dbReference type="SUPFAM" id="SSF54821">
    <property type="entry name" value="Ribosomal protein S3 C-terminal domain"/>
    <property type="match status" value="1"/>
</dbReference>
<dbReference type="PROSITE" id="PS50823">
    <property type="entry name" value="KH_TYPE_2"/>
    <property type="match status" value="1"/>
</dbReference>
<dbReference type="PROSITE" id="PS00548">
    <property type="entry name" value="RIBOSOMAL_S3"/>
    <property type="match status" value="1"/>
</dbReference>
<protein>
    <recommendedName>
        <fullName evidence="2">Small ribosomal subunit protein uS3c</fullName>
    </recommendedName>
    <alternativeName>
        <fullName>30S ribosomal protein S3, chloroplastic</fullName>
    </alternativeName>
</protein>
<organism>
    <name type="scientific">Nicotiana tomentosiformis</name>
    <name type="common">Tobacco</name>
    <dbReference type="NCBI Taxonomy" id="4098"/>
    <lineage>
        <taxon>Eukaryota</taxon>
        <taxon>Viridiplantae</taxon>
        <taxon>Streptophyta</taxon>
        <taxon>Embryophyta</taxon>
        <taxon>Tracheophyta</taxon>
        <taxon>Spermatophyta</taxon>
        <taxon>Magnoliopsida</taxon>
        <taxon>eudicotyledons</taxon>
        <taxon>Gunneridae</taxon>
        <taxon>Pentapetalae</taxon>
        <taxon>asterids</taxon>
        <taxon>lamiids</taxon>
        <taxon>Solanales</taxon>
        <taxon>Solanaceae</taxon>
        <taxon>Nicotianoideae</taxon>
        <taxon>Nicotianeae</taxon>
        <taxon>Nicotiana</taxon>
    </lineage>
</organism>
<proteinExistence type="inferred from homology"/>
<name>RR3_NICTO</name>
<accession>Q33BZ3</accession>